<organism>
    <name type="scientific">Chlamydia caviae (strain ATCC VR-813 / DSM 19441 / 03DC25 / GPIC)</name>
    <name type="common">Chlamydophila caviae</name>
    <dbReference type="NCBI Taxonomy" id="227941"/>
    <lineage>
        <taxon>Bacteria</taxon>
        <taxon>Pseudomonadati</taxon>
        <taxon>Chlamydiota</taxon>
        <taxon>Chlamydiia</taxon>
        <taxon>Chlamydiales</taxon>
        <taxon>Chlamydiaceae</taxon>
        <taxon>Chlamydia/Chlamydophila group</taxon>
        <taxon>Chlamydia</taxon>
    </lineage>
</organism>
<feature type="chain" id="PRO_0000091661" description="3-hydroxyacyl-[acyl-carrier-protein] dehydratase FabZ">
    <location>
        <begin position="1"/>
        <end position="154"/>
    </location>
</feature>
<feature type="active site" evidence="1">
    <location>
        <position position="54"/>
    </location>
</feature>
<evidence type="ECO:0000255" key="1">
    <source>
        <dbReference type="HAMAP-Rule" id="MF_00406"/>
    </source>
</evidence>
<proteinExistence type="inferred from homology"/>
<name>FABZ_CHLCV</name>
<reference key="1">
    <citation type="journal article" date="2003" name="Nucleic Acids Res.">
        <title>Genome sequence of Chlamydophila caviae (Chlamydia psittaci GPIC): examining the role of niche-specific genes in the evolution of the Chlamydiaceae.</title>
        <authorList>
            <person name="Read T.D."/>
            <person name="Myers G.S.A."/>
            <person name="Brunham R.C."/>
            <person name="Nelson W.C."/>
            <person name="Paulsen I.T."/>
            <person name="Heidelberg J.F."/>
            <person name="Holtzapple E.K."/>
            <person name="Khouri H.M."/>
            <person name="Federova N.B."/>
            <person name="Carty H.A."/>
            <person name="Umayam L.A."/>
            <person name="Haft D.H."/>
            <person name="Peterson J.D."/>
            <person name="Beanan M.J."/>
            <person name="White O."/>
            <person name="Salzberg S.L."/>
            <person name="Hsia R.-C."/>
            <person name="McClarty G."/>
            <person name="Rank R.G."/>
            <person name="Bavoil P.M."/>
            <person name="Fraser C.M."/>
        </authorList>
    </citation>
    <scope>NUCLEOTIDE SEQUENCE [LARGE SCALE GENOMIC DNA]</scope>
    <source>
        <strain>ATCC VR-813 / DSM 19441 / 03DC25 / GPIC</strain>
    </source>
</reference>
<comment type="function">
    <text evidence="1">Involved in unsaturated fatty acids biosynthesis. Catalyzes the dehydration of short chain beta-hydroxyacyl-ACPs and long chain saturated and unsaturated beta-hydroxyacyl-ACPs.</text>
</comment>
<comment type="catalytic activity">
    <reaction evidence="1">
        <text>a (3R)-hydroxyacyl-[ACP] = a (2E)-enoyl-[ACP] + H2O</text>
        <dbReference type="Rhea" id="RHEA:13097"/>
        <dbReference type="Rhea" id="RHEA-COMP:9925"/>
        <dbReference type="Rhea" id="RHEA-COMP:9945"/>
        <dbReference type="ChEBI" id="CHEBI:15377"/>
        <dbReference type="ChEBI" id="CHEBI:78784"/>
        <dbReference type="ChEBI" id="CHEBI:78827"/>
        <dbReference type="EC" id="4.2.1.59"/>
    </reaction>
</comment>
<comment type="subcellular location">
    <subcellularLocation>
        <location evidence="1">Cytoplasm</location>
    </subcellularLocation>
</comment>
<comment type="similarity">
    <text evidence="1">Belongs to the thioester dehydratase family. FabZ subfamily.</text>
</comment>
<accession>Q820F1</accession>
<dbReference type="EC" id="4.2.1.59" evidence="1"/>
<dbReference type="EMBL" id="AE015925">
    <property type="protein sequence ID" value="AAP04841.1"/>
    <property type="molecule type" value="Genomic_DNA"/>
</dbReference>
<dbReference type="RefSeq" id="WP_011006062.1">
    <property type="nucleotide sequence ID" value="NC_003361.3"/>
</dbReference>
<dbReference type="SMR" id="Q820F1"/>
<dbReference type="STRING" id="227941.CCA_00089"/>
<dbReference type="KEGG" id="cca:CCA_00089"/>
<dbReference type="eggNOG" id="COG0764">
    <property type="taxonomic scope" value="Bacteria"/>
</dbReference>
<dbReference type="HOGENOM" id="CLU_078912_3_3_0"/>
<dbReference type="OrthoDB" id="9772788at2"/>
<dbReference type="Proteomes" id="UP000002193">
    <property type="component" value="Chromosome"/>
</dbReference>
<dbReference type="GO" id="GO:0005737">
    <property type="term" value="C:cytoplasm"/>
    <property type="evidence" value="ECO:0007669"/>
    <property type="project" value="UniProtKB-SubCell"/>
</dbReference>
<dbReference type="GO" id="GO:0016020">
    <property type="term" value="C:membrane"/>
    <property type="evidence" value="ECO:0007669"/>
    <property type="project" value="GOC"/>
</dbReference>
<dbReference type="GO" id="GO:0019171">
    <property type="term" value="F:(3R)-hydroxyacyl-[acyl-carrier-protein] dehydratase activity"/>
    <property type="evidence" value="ECO:0007669"/>
    <property type="project" value="UniProtKB-EC"/>
</dbReference>
<dbReference type="GO" id="GO:0006633">
    <property type="term" value="P:fatty acid biosynthetic process"/>
    <property type="evidence" value="ECO:0007669"/>
    <property type="project" value="UniProtKB-UniRule"/>
</dbReference>
<dbReference type="GO" id="GO:0009245">
    <property type="term" value="P:lipid A biosynthetic process"/>
    <property type="evidence" value="ECO:0007669"/>
    <property type="project" value="UniProtKB-UniRule"/>
</dbReference>
<dbReference type="CDD" id="cd01288">
    <property type="entry name" value="FabZ"/>
    <property type="match status" value="1"/>
</dbReference>
<dbReference type="FunFam" id="3.10.129.10:FF:000001">
    <property type="entry name" value="3-hydroxyacyl-[acyl-carrier-protein] dehydratase FabZ"/>
    <property type="match status" value="1"/>
</dbReference>
<dbReference type="Gene3D" id="3.10.129.10">
    <property type="entry name" value="Hotdog Thioesterase"/>
    <property type="match status" value="1"/>
</dbReference>
<dbReference type="HAMAP" id="MF_00406">
    <property type="entry name" value="FabZ"/>
    <property type="match status" value="1"/>
</dbReference>
<dbReference type="InterPro" id="IPR013114">
    <property type="entry name" value="FabA_FabZ"/>
</dbReference>
<dbReference type="InterPro" id="IPR010084">
    <property type="entry name" value="FabZ"/>
</dbReference>
<dbReference type="InterPro" id="IPR029069">
    <property type="entry name" value="HotDog_dom_sf"/>
</dbReference>
<dbReference type="NCBIfam" id="TIGR01750">
    <property type="entry name" value="fabZ"/>
    <property type="match status" value="1"/>
</dbReference>
<dbReference type="NCBIfam" id="NF000582">
    <property type="entry name" value="PRK00006.1"/>
    <property type="match status" value="1"/>
</dbReference>
<dbReference type="PANTHER" id="PTHR30272">
    <property type="entry name" value="3-HYDROXYACYL-[ACYL-CARRIER-PROTEIN] DEHYDRATASE"/>
    <property type="match status" value="1"/>
</dbReference>
<dbReference type="PANTHER" id="PTHR30272:SF1">
    <property type="entry name" value="3-HYDROXYACYL-[ACYL-CARRIER-PROTEIN] DEHYDRATASE"/>
    <property type="match status" value="1"/>
</dbReference>
<dbReference type="Pfam" id="PF07977">
    <property type="entry name" value="FabA"/>
    <property type="match status" value="1"/>
</dbReference>
<dbReference type="SUPFAM" id="SSF54637">
    <property type="entry name" value="Thioesterase/thiol ester dehydrase-isomerase"/>
    <property type="match status" value="1"/>
</dbReference>
<keyword id="KW-0963">Cytoplasm</keyword>
<keyword id="KW-0441">Lipid A biosynthesis</keyword>
<keyword id="KW-0444">Lipid biosynthesis</keyword>
<keyword id="KW-0443">Lipid metabolism</keyword>
<keyword id="KW-0456">Lyase</keyword>
<protein>
    <recommendedName>
        <fullName evidence="1">3-hydroxyacyl-[acyl-carrier-protein] dehydratase FabZ</fullName>
        <ecNumber evidence="1">4.2.1.59</ecNumber>
    </recommendedName>
    <alternativeName>
        <fullName evidence="1">(3R)-hydroxymyristoyl-[acyl-carrier-protein] dehydratase</fullName>
        <shortName evidence="1">(3R)-hydroxymyristoyl-ACP dehydrase</shortName>
    </alternativeName>
    <alternativeName>
        <fullName evidence="1">Beta-hydroxyacyl-ACP dehydratase</fullName>
    </alternativeName>
</protein>
<gene>
    <name evidence="1" type="primary">fabZ</name>
    <name type="ordered locus">CCA_00089</name>
</gene>
<sequence>MKEAPVIKLRELLNLLPHRYPFLLVDKVLSYDLEKRSIVAQKNVTINEPFFVGHFPEVPIMPGVLILESLAQAAGVLLGLVLENDRNKRLALFLGIQKAKFRQAVRPGDILTLSAEFSLISSKGGKASARACVGSQVAAEGELSFALVDKQSLD</sequence>